<comment type="function">
    <text evidence="6 7 8 9">S-adenosyl-L-methionine-dependent 2'-O-ribose methyltransferase that catalyzes the formation of 2'-O-methylguanosine at position 1370 (Gm1370) in the 16S mitochondrial large subunit ribosomal RNA (mtLSU rRNA), a conserved modification in the peptidyl transferase domain of the mtLSU rRNA (PubMed:24036117, PubMed:25009282, PubMed:25074936, PubMed:35177605). Also required for formation of 2'-O-methyluridine at position 1369 (Um1369) mediated by MRM2 (PubMed:35177605).</text>
</comment>
<comment type="catalytic activity">
    <reaction evidence="9 14 15">
        <text>guanosine(1370) in 16S rRNA + S-adenosyl-L-methionine = 2'-O-methylguanosine(1370) in 16S rRNA + S-adenosyl-L-homocysteine + H(+)</text>
        <dbReference type="Rhea" id="RHEA:47756"/>
        <dbReference type="Rhea" id="RHEA-COMP:11899"/>
        <dbReference type="Rhea" id="RHEA-COMP:11900"/>
        <dbReference type="ChEBI" id="CHEBI:15378"/>
        <dbReference type="ChEBI" id="CHEBI:57856"/>
        <dbReference type="ChEBI" id="CHEBI:59789"/>
        <dbReference type="ChEBI" id="CHEBI:74269"/>
        <dbReference type="ChEBI" id="CHEBI:74445"/>
    </reaction>
</comment>
<comment type="interaction">
    <interactant intactId="EBI-1045440">
        <id>Q9HC36</id>
    </interactant>
    <interactant intactId="EBI-11957045">
        <id>Q9NVV5-2</id>
        <label>AIG1</label>
    </interactant>
    <organismsDiffer>false</organismsDiffer>
    <experiments>3</experiments>
</comment>
<comment type="interaction">
    <interactant intactId="EBI-1045440">
        <id>Q9HC36</id>
    </interactant>
    <interactant intactId="EBI-8648738">
        <id>Q8WVV5</id>
        <label>BTN2A2</label>
    </interactant>
    <organismsDiffer>false</organismsDiffer>
    <experiments>3</experiments>
</comment>
<comment type="interaction">
    <interactant intactId="EBI-1045440">
        <id>Q9HC36</id>
    </interactant>
    <interactant intactId="EBI-12003442">
        <id>Q8WVX3-2</id>
        <label>C4orf3</label>
    </interactant>
    <organismsDiffer>false</organismsDiffer>
    <experiments>3</experiments>
</comment>
<comment type="interaction">
    <interactant intactId="EBI-1045440">
        <id>Q9HC36</id>
    </interactant>
    <interactant intactId="EBI-741101">
        <id>Q13643</id>
        <label>FHL3</label>
    </interactant>
    <organismsDiffer>false</organismsDiffer>
    <experiments>8</experiments>
</comment>
<comment type="interaction">
    <interactant intactId="EBI-1045440">
        <id>Q9HC36</id>
    </interactant>
    <interactant intactId="EBI-9304251">
        <id>Q05329</id>
        <label>GAD2</label>
    </interactant>
    <organismsDiffer>false</organismsDiffer>
    <experiments>3</experiments>
</comment>
<comment type="interaction">
    <interactant intactId="EBI-1045440">
        <id>Q9HC36</id>
    </interactant>
    <interactant intactId="EBI-10226985">
        <id>Q10471</id>
        <label>GALNT2</label>
    </interactant>
    <organismsDiffer>false</organismsDiffer>
    <experiments>3</experiments>
</comment>
<comment type="interaction">
    <interactant intactId="EBI-1045440">
        <id>Q9HC36</id>
    </interactant>
    <interactant intactId="EBI-10266796">
        <id>Q8N5M9</id>
        <label>JAGN1</label>
    </interactant>
    <organismsDiffer>false</organismsDiffer>
    <experiments>3</experiments>
</comment>
<comment type="interaction">
    <interactant intactId="EBI-1045440">
        <id>Q9HC36</id>
    </interactant>
    <interactant intactId="EBI-8449636">
        <id>P30301</id>
        <label>MIP</label>
    </interactant>
    <organismsDiffer>false</organismsDiffer>
    <experiments>3</experiments>
</comment>
<comment type="interaction">
    <interactant intactId="EBI-1045440">
        <id>Q9HC36</id>
    </interactant>
    <interactant intactId="EBI-1045440">
        <id>Q9HC36</id>
        <label>MRM3</label>
    </interactant>
    <organismsDiffer>false</organismsDiffer>
    <experiments>3</experiments>
</comment>
<comment type="interaction">
    <interactant intactId="EBI-1045440">
        <id>Q9HC36</id>
    </interactant>
    <interactant intactId="EBI-12056025">
        <id>Q14162</id>
        <label>SCARF1</label>
    </interactant>
    <organismsDiffer>false</organismsDiffer>
    <experiments>3</experiments>
</comment>
<comment type="interaction">
    <interactant intactId="EBI-1045440">
        <id>Q9HC36</id>
    </interactant>
    <interactant intactId="EBI-359977">
        <id>P01375</id>
        <label>TNF</label>
    </interactant>
    <organismsDiffer>false</organismsDiffer>
    <experiments>3</experiments>
</comment>
<comment type="interaction">
    <interactant intactId="EBI-1045440">
        <id>Q9HC36</id>
    </interactant>
    <interactant intactId="EBI-2819725">
        <id>Q9Y5Z9</id>
        <label>UBIAD1</label>
    </interactant>
    <organismsDiffer>false</organismsDiffer>
    <experiments>3</experiments>
</comment>
<comment type="interaction">
    <interactant intactId="EBI-1045440">
        <id>Q9HC36</id>
    </interactant>
    <interactant intactId="EBI-718439">
        <id>O95159</id>
        <label>ZFPL1</label>
    </interactant>
    <organismsDiffer>false</organismsDiffer>
    <experiments>3</experiments>
</comment>
<comment type="interaction">
    <interactant intactId="EBI-1045440">
        <id>Q9HC36</id>
    </interactant>
    <interactant intactId="EBI-25475856">
        <id>P0DTC9</id>
        <label>N</label>
    </interactant>
    <organismsDiffer>true</organismsDiffer>
    <experiments>5</experiments>
</comment>
<comment type="subcellular location">
    <subcellularLocation>
        <location evidence="6 7">Mitochondrion</location>
    </subcellularLocation>
</comment>
<comment type="tissue specificity">
    <text evidence="4">Expressed at same level in normal liver and hepatocarcinoma.</text>
</comment>
<comment type="similarity">
    <text evidence="13">Belongs to the class IV-like SAM-binding methyltransferase superfamily. RNA methyltransferase TrmH family.</text>
</comment>
<protein>
    <recommendedName>
        <fullName evidence="11">rRNA methyltransferase 3, mitochondrial</fullName>
        <ecNumber evidence="9 14 15">2.1.1.-</ecNumber>
    </recommendedName>
    <alternativeName>
        <fullName evidence="12">16S rRNA (guanosine(1370)-2'-O)-methyltransferase</fullName>
    </alternativeName>
    <alternativeName>
        <fullName evidence="12">16S rRNA [Gm1370] 2'-O-methyltransferase</fullName>
    </alternativeName>
    <alternativeName>
        <fullName evidence="10">RNA methyltransferase-like protein 1</fullName>
    </alternativeName>
</protein>
<dbReference type="EC" id="2.1.1.-" evidence="9 14 15"/>
<dbReference type="EMBL" id="AK001443">
    <property type="protein sequence ID" value="BAA91694.1"/>
    <property type="molecule type" value="mRNA"/>
</dbReference>
<dbReference type="EMBL" id="AK222900">
    <property type="protein sequence ID" value="BAD96620.1"/>
    <property type="molecule type" value="mRNA"/>
</dbReference>
<dbReference type="EMBL" id="AF177344">
    <property type="protein sequence ID" value="AAG17988.2"/>
    <property type="molecule type" value="mRNA"/>
</dbReference>
<dbReference type="EMBL" id="CH471108">
    <property type="protein sequence ID" value="EAW90642.1"/>
    <property type="molecule type" value="Genomic_DNA"/>
</dbReference>
<dbReference type="EMBL" id="BC011550">
    <property type="protein sequence ID" value="AAH11550.1"/>
    <property type="molecule type" value="mRNA"/>
</dbReference>
<dbReference type="EMBL" id="BC050614">
    <property type="protein sequence ID" value="AAH50614.1"/>
    <property type="molecule type" value="mRNA"/>
</dbReference>
<dbReference type="CCDS" id="CCDS10997.1"/>
<dbReference type="RefSeq" id="NP_001304876.1">
    <property type="nucleotide sequence ID" value="NM_001317947.1"/>
</dbReference>
<dbReference type="RefSeq" id="NP_060616.1">
    <property type="nucleotide sequence ID" value="NM_018146.4"/>
</dbReference>
<dbReference type="PDB" id="7OI6">
    <property type="method" value="EM"/>
    <property type="resolution" value="5.70 A"/>
    <property type="chains" value="1/z=1-420"/>
</dbReference>
<dbReference type="PDBsum" id="7OI6"/>
<dbReference type="EMDB" id="EMD-12919"/>
<dbReference type="SMR" id="Q9HC36"/>
<dbReference type="BioGRID" id="120477">
    <property type="interactions" value="182"/>
</dbReference>
<dbReference type="FunCoup" id="Q9HC36">
    <property type="interactions" value="949"/>
</dbReference>
<dbReference type="IntAct" id="Q9HC36">
    <property type="interactions" value="93"/>
</dbReference>
<dbReference type="MINT" id="Q9HC36"/>
<dbReference type="STRING" id="9606.ENSP00000306080"/>
<dbReference type="GlyCosmos" id="Q9HC36">
    <property type="glycosylation" value="1 site, 1 glycan"/>
</dbReference>
<dbReference type="GlyGen" id="Q9HC36">
    <property type="glycosylation" value="1 site, 1 O-linked glycan (1 site)"/>
</dbReference>
<dbReference type="iPTMnet" id="Q9HC36"/>
<dbReference type="PhosphoSitePlus" id="Q9HC36"/>
<dbReference type="SwissPalm" id="Q9HC36"/>
<dbReference type="BioMuta" id="MRM3"/>
<dbReference type="DMDM" id="74734265"/>
<dbReference type="jPOST" id="Q9HC36"/>
<dbReference type="MassIVE" id="Q9HC36"/>
<dbReference type="PaxDb" id="9606-ENSP00000306080"/>
<dbReference type="PeptideAtlas" id="Q9HC36"/>
<dbReference type="ProteomicsDB" id="81632"/>
<dbReference type="Pumba" id="Q9HC36"/>
<dbReference type="Antibodypedia" id="10311">
    <property type="antibodies" value="104 antibodies from 20 providers"/>
</dbReference>
<dbReference type="DNASU" id="55178"/>
<dbReference type="Ensembl" id="ENST00000304478.9">
    <property type="protein sequence ID" value="ENSP00000306080.4"/>
    <property type="gene ID" value="ENSG00000171861.11"/>
</dbReference>
<dbReference type="GeneID" id="55178"/>
<dbReference type="KEGG" id="hsa:55178"/>
<dbReference type="MANE-Select" id="ENST00000304478.9">
    <property type="protein sequence ID" value="ENSP00000306080.4"/>
    <property type="RefSeq nucleotide sequence ID" value="NM_018146.4"/>
    <property type="RefSeq protein sequence ID" value="NP_060616.1"/>
</dbReference>
<dbReference type="UCSC" id="uc002frw.4">
    <property type="organism name" value="human"/>
</dbReference>
<dbReference type="AGR" id="HGNC:18485"/>
<dbReference type="CTD" id="55178"/>
<dbReference type="GeneCards" id="MRM3"/>
<dbReference type="HGNC" id="HGNC:18485">
    <property type="gene designation" value="MRM3"/>
</dbReference>
<dbReference type="HPA" id="ENSG00000171861">
    <property type="expression patterns" value="Low tissue specificity"/>
</dbReference>
<dbReference type="MIM" id="612600">
    <property type="type" value="gene"/>
</dbReference>
<dbReference type="neXtProt" id="NX_Q9HC36"/>
<dbReference type="OpenTargets" id="ENSG00000171861"/>
<dbReference type="PharmGKB" id="PA38341"/>
<dbReference type="VEuPathDB" id="HostDB:ENSG00000171861"/>
<dbReference type="eggNOG" id="KOG2506">
    <property type="taxonomic scope" value="Eukaryota"/>
</dbReference>
<dbReference type="GeneTree" id="ENSGT00390000017317"/>
<dbReference type="HOGENOM" id="CLU_021322_1_0_1"/>
<dbReference type="InParanoid" id="Q9HC36"/>
<dbReference type="OMA" id="FLKFHKY"/>
<dbReference type="OrthoDB" id="270651at2759"/>
<dbReference type="PAN-GO" id="Q9HC36">
    <property type="GO annotations" value="0 GO annotations based on evolutionary models"/>
</dbReference>
<dbReference type="PhylomeDB" id="Q9HC36"/>
<dbReference type="TreeFam" id="TF323420"/>
<dbReference type="BRENDA" id="2.1.1.B124">
    <property type="organism ID" value="2681"/>
</dbReference>
<dbReference type="PathwayCommons" id="Q9HC36"/>
<dbReference type="Reactome" id="R-HSA-6793080">
    <property type="pathway name" value="rRNA modification in the mitochondrion"/>
</dbReference>
<dbReference type="SignaLink" id="Q9HC36"/>
<dbReference type="BioGRID-ORCS" id="55178">
    <property type="hits" value="116 hits in 1152 CRISPR screens"/>
</dbReference>
<dbReference type="CD-CODE" id="5965E019">
    <property type="entry name" value="mtRNA granule"/>
</dbReference>
<dbReference type="ChiTaRS" id="MRM3">
    <property type="organism name" value="human"/>
</dbReference>
<dbReference type="GeneWiki" id="RNMTL1"/>
<dbReference type="GenomeRNAi" id="55178"/>
<dbReference type="Pharos" id="Q9HC36">
    <property type="development level" value="Tbio"/>
</dbReference>
<dbReference type="PRO" id="PR:Q9HC36"/>
<dbReference type="Proteomes" id="UP000005640">
    <property type="component" value="Chromosome 17"/>
</dbReference>
<dbReference type="RNAct" id="Q9HC36">
    <property type="molecule type" value="protein"/>
</dbReference>
<dbReference type="Bgee" id="ENSG00000171861">
    <property type="expression patterns" value="Expressed in endothelial cell and 187 other cell types or tissues"/>
</dbReference>
<dbReference type="ExpressionAtlas" id="Q9HC36">
    <property type="expression patterns" value="baseline and differential"/>
</dbReference>
<dbReference type="GO" id="GO:0005759">
    <property type="term" value="C:mitochondrial matrix"/>
    <property type="evidence" value="ECO:0000315"/>
    <property type="project" value="FlyBase"/>
</dbReference>
<dbReference type="GO" id="GO:0005739">
    <property type="term" value="C:mitochondrion"/>
    <property type="evidence" value="ECO:0000314"/>
    <property type="project" value="HPA"/>
</dbReference>
<dbReference type="GO" id="GO:0042802">
    <property type="term" value="F:identical protein binding"/>
    <property type="evidence" value="ECO:0000353"/>
    <property type="project" value="IntAct"/>
</dbReference>
<dbReference type="GO" id="GO:0003723">
    <property type="term" value="F:RNA binding"/>
    <property type="evidence" value="ECO:0007005"/>
    <property type="project" value="UniProtKB"/>
</dbReference>
<dbReference type="GO" id="GO:0070039">
    <property type="term" value="F:rRNA (guanosine-2'-O-)-methyltransferase activity"/>
    <property type="evidence" value="ECO:0000315"/>
    <property type="project" value="FlyBase"/>
</dbReference>
<dbReference type="GO" id="GO:0000451">
    <property type="term" value="P:rRNA 2'-O-methylation"/>
    <property type="evidence" value="ECO:0000304"/>
    <property type="project" value="Reactome"/>
</dbReference>
<dbReference type="GO" id="GO:0006364">
    <property type="term" value="P:rRNA processing"/>
    <property type="evidence" value="ECO:0000315"/>
    <property type="project" value="FlyBase"/>
</dbReference>
<dbReference type="CDD" id="cd18106">
    <property type="entry name" value="SpoU-like_RNMTL1"/>
    <property type="match status" value="1"/>
</dbReference>
<dbReference type="FunFam" id="3.30.1330.30:FF:000023">
    <property type="entry name" value="rRNA methyltransferase 3, mitochondrial"/>
    <property type="match status" value="1"/>
</dbReference>
<dbReference type="Gene3D" id="3.30.1330.30">
    <property type="match status" value="1"/>
</dbReference>
<dbReference type="Gene3D" id="3.40.1280.10">
    <property type="match status" value="1"/>
</dbReference>
<dbReference type="InterPro" id="IPR029028">
    <property type="entry name" value="Alpha/beta_knot_MTases"/>
</dbReference>
<dbReference type="InterPro" id="IPR053888">
    <property type="entry name" value="MRM3-like_sub_bind"/>
</dbReference>
<dbReference type="InterPro" id="IPR029064">
    <property type="entry name" value="Ribosomal_eL30-like_sf"/>
</dbReference>
<dbReference type="InterPro" id="IPR051259">
    <property type="entry name" value="rRNA_Methyltransferase"/>
</dbReference>
<dbReference type="InterPro" id="IPR001537">
    <property type="entry name" value="SpoU_MeTrfase"/>
</dbReference>
<dbReference type="InterPro" id="IPR013123">
    <property type="entry name" value="SpoU_subst-bd"/>
</dbReference>
<dbReference type="InterPro" id="IPR029026">
    <property type="entry name" value="tRNA_m1G_MTases_N"/>
</dbReference>
<dbReference type="PANTHER" id="PTHR43191">
    <property type="entry name" value="RRNA METHYLTRANSFERASE 3"/>
    <property type="match status" value="1"/>
</dbReference>
<dbReference type="PANTHER" id="PTHR43191:SF2">
    <property type="entry name" value="RRNA METHYLTRANSFERASE 3, MITOCHONDRIAL"/>
    <property type="match status" value="1"/>
</dbReference>
<dbReference type="Pfam" id="PF22435">
    <property type="entry name" value="MRM3-like_sub_bind"/>
    <property type="match status" value="1"/>
</dbReference>
<dbReference type="Pfam" id="PF00588">
    <property type="entry name" value="SpoU_methylase"/>
    <property type="match status" value="1"/>
</dbReference>
<dbReference type="SMART" id="SM00967">
    <property type="entry name" value="SpoU_sub_bind"/>
    <property type="match status" value="1"/>
</dbReference>
<dbReference type="SUPFAM" id="SSF75217">
    <property type="entry name" value="alpha/beta knot"/>
    <property type="match status" value="1"/>
</dbReference>
<dbReference type="SUPFAM" id="SSF55315">
    <property type="entry name" value="L30e-like"/>
    <property type="match status" value="1"/>
</dbReference>
<name>MRM3_HUMAN</name>
<organism>
    <name type="scientific">Homo sapiens</name>
    <name type="common">Human</name>
    <dbReference type="NCBI Taxonomy" id="9606"/>
    <lineage>
        <taxon>Eukaryota</taxon>
        <taxon>Metazoa</taxon>
        <taxon>Chordata</taxon>
        <taxon>Craniata</taxon>
        <taxon>Vertebrata</taxon>
        <taxon>Euteleostomi</taxon>
        <taxon>Mammalia</taxon>
        <taxon>Eutheria</taxon>
        <taxon>Euarchontoglires</taxon>
        <taxon>Primates</taxon>
        <taxon>Haplorrhini</taxon>
        <taxon>Catarrhini</taxon>
        <taxon>Hominidae</taxon>
        <taxon>Homo</taxon>
    </lineage>
</organism>
<accession>Q9HC36</accession>
<accession>Q53GN1</accession>
<accession>Q86VC3</accession>
<accession>Q96F76</accession>
<accession>Q9NVQ5</accession>
<gene>
    <name evidence="11 16" type="primary">MRM3</name>
    <name evidence="10" type="synonym">RNMTL1</name>
    <name type="ORF">HC90</name>
</gene>
<proteinExistence type="evidence at protein level"/>
<sequence>MAALVRPARFVVRPLLQVVQAWDLDARRWVRALRRSPVKVVFPSGEVVEQKRAPGKQPRKAPSEASAQEQREKQPLEESASRAPSTWEESGLRYDKAYPGDRRLSSVMTIVKSRPFREKQGKILLEGRRLISDALKAGAVPKMFFFSRLEYLKELPVDKLKGVSLIKVKFEDIKDWSDLVTPQGIMGIFAKPDHVKMTYPKTQLQHSLPLLLICDNLRDPGNLGTILRSAAGAGCSKVLLTKGCVDAWEPKVLRAGMGAHFRMPIINNLEWETVPNYLPPDTRVYVADNCGLYAQAEMSNKASDHGWVCDQRVMKFHKYEEEEDVETGASQDWLPHVEVQSYDSDWTEAPAAVVIGGETYGVSLESLQLAESTGGKRLLIPVVPGVDSLNSAMAASILLFEGKRQLRGRAEDLSRDRSYH</sequence>
<reference key="1">
    <citation type="journal article" date="2004" name="Nat. Genet.">
        <title>Complete sequencing and characterization of 21,243 full-length human cDNAs.</title>
        <authorList>
            <person name="Ota T."/>
            <person name="Suzuki Y."/>
            <person name="Nishikawa T."/>
            <person name="Otsuki T."/>
            <person name="Sugiyama T."/>
            <person name="Irie R."/>
            <person name="Wakamatsu A."/>
            <person name="Hayashi K."/>
            <person name="Sato H."/>
            <person name="Nagai K."/>
            <person name="Kimura K."/>
            <person name="Makita H."/>
            <person name="Sekine M."/>
            <person name="Obayashi M."/>
            <person name="Nishi T."/>
            <person name="Shibahara T."/>
            <person name="Tanaka T."/>
            <person name="Ishii S."/>
            <person name="Yamamoto J."/>
            <person name="Saito K."/>
            <person name="Kawai Y."/>
            <person name="Isono Y."/>
            <person name="Nakamura Y."/>
            <person name="Nagahari K."/>
            <person name="Murakami K."/>
            <person name="Yasuda T."/>
            <person name="Iwayanagi T."/>
            <person name="Wagatsuma M."/>
            <person name="Shiratori A."/>
            <person name="Sudo H."/>
            <person name="Hosoiri T."/>
            <person name="Kaku Y."/>
            <person name="Kodaira H."/>
            <person name="Kondo H."/>
            <person name="Sugawara M."/>
            <person name="Takahashi M."/>
            <person name="Kanda K."/>
            <person name="Yokoi T."/>
            <person name="Furuya T."/>
            <person name="Kikkawa E."/>
            <person name="Omura Y."/>
            <person name="Abe K."/>
            <person name="Kamihara K."/>
            <person name="Katsuta N."/>
            <person name="Sato K."/>
            <person name="Tanikawa M."/>
            <person name="Yamazaki M."/>
            <person name="Ninomiya K."/>
            <person name="Ishibashi T."/>
            <person name="Yamashita H."/>
            <person name="Murakawa K."/>
            <person name="Fujimori K."/>
            <person name="Tanai H."/>
            <person name="Kimata M."/>
            <person name="Watanabe M."/>
            <person name="Hiraoka S."/>
            <person name="Chiba Y."/>
            <person name="Ishida S."/>
            <person name="Ono Y."/>
            <person name="Takiguchi S."/>
            <person name="Watanabe S."/>
            <person name="Yosida M."/>
            <person name="Hotuta T."/>
            <person name="Kusano J."/>
            <person name="Kanehori K."/>
            <person name="Takahashi-Fujii A."/>
            <person name="Hara H."/>
            <person name="Tanase T.-O."/>
            <person name="Nomura Y."/>
            <person name="Togiya S."/>
            <person name="Komai F."/>
            <person name="Hara R."/>
            <person name="Takeuchi K."/>
            <person name="Arita M."/>
            <person name="Imose N."/>
            <person name="Musashino K."/>
            <person name="Yuuki H."/>
            <person name="Oshima A."/>
            <person name="Sasaki N."/>
            <person name="Aotsuka S."/>
            <person name="Yoshikawa Y."/>
            <person name="Matsunawa H."/>
            <person name="Ichihara T."/>
            <person name="Shiohata N."/>
            <person name="Sano S."/>
            <person name="Moriya S."/>
            <person name="Momiyama H."/>
            <person name="Satoh N."/>
            <person name="Takami S."/>
            <person name="Terashima Y."/>
            <person name="Suzuki O."/>
            <person name="Nakagawa S."/>
            <person name="Senoh A."/>
            <person name="Mizoguchi H."/>
            <person name="Goto Y."/>
            <person name="Shimizu F."/>
            <person name="Wakebe H."/>
            <person name="Hishigaki H."/>
            <person name="Watanabe T."/>
            <person name="Sugiyama A."/>
            <person name="Takemoto M."/>
            <person name="Kawakami B."/>
            <person name="Yamazaki M."/>
            <person name="Watanabe K."/>
            <person name="Kumagai A."/>
            <person name="Itakura S."/>
            <person name="Fukuzumi Y."/>
            <person name="Fujimori Y."/>
            <person name="Komiyama M."/>
            <person name="Tashiro H."/>
            <person name="Tanigami A."/>
            <person name="Fujiwara T."/>
            <person name="Ono T."/>
            <person name="Yamada K."/>
            <person name="Fujii Y."/>
            <person name="Ozaki K."/>
            <person name="Hirao M."/>
            <person name="Ohmori Y."/>
            <person name="Kawabata A."/>
            <person name="Hikiji T."/>
            <person name="Kobatake N."/>
            <person name="Inagaki H."/>
            <person name="Ikema Y."/>
            <person name="Okamoto S."/>
            <person name="Okitani R."/>
            <person name="Kawakami T."/>
            <person name="Noguchi S."/>
            <person name="Itoh T."/>
            <person name="Shigeta K."/>
            <person name="Senba T."/>
            <person name="Matsumura K."/>
            <person name="Nakajima Y."/>
            <person name="Mizuno T."/>
            <person name="Morinaga M."/>
            <person name="Sasaki M."/>
            <person name="Togashi T."/>
            <person name="Oyama M."/>
            <person name="Hata H."/>
            <person name="Watanabe M."/>
            <person name="Komatsu T."/>
            <person name="Mizushima-Sugano J."/>
            <person name="Satoh T."/>
            <person name="Shirai Y."/>
            <person name="Takahashi Y."/>
            <person name="Nakagawa K."/>
            <person name="Okumura K."/>
            <person name="Nagase T."/>
            <person name="Nomura N."/>
            <person name="Kikuchi H."/>
            <person name="Masuho Y."/>
            <person name="Yamashita R."/>
            <person name="Nakai K."/>
            <person name="Yada T."/>
            <person name="Nakamura Y."/>
            <person name="Ohara O."/>
            <person name="Isogai T."/>
            <person name="Sugano S."/>
        </authorList>
    </citation>
    <scope>NUCLEOTIDE SEQUENCE [LARGE SCALE MRNA]</scope>
    <source>
        <tissue>Teratocarcinoma</tissue>
    </source>
</reference>
<reference key="2">
    <citation type="submission" date="2005-04" db="EMBL/GenBank/DDBJ databases">
        <authorList>
            <person name="Suzuki Y."/>
            <person name="Sugano S."/>
            <person name="Totoki Y."/>
            <person name="Toyoda A."/>
            <person name="Takeda T."/>
            <person name="Sakaki Y."/>
            <person name="Tanaka A."/>
            <person name="Yokoyama S."/>
        </authorList>
    </citation>
    <scope>NUCLEOTIDE SEQUENCE [LARGE SCALE MRNA]</scope>
    <source>
        <tissue>Kidney</tissue>
    </source>
</reference>
<reference key="3">
    <citation type="submission" date="2002-03" db="EMBL/GenBank/DDBJ databases">
        <title>Homo sapiens P579 chromosome 17p DNA sequence fragment.</title>
        <authorList>
            <person name="Gu J.R."/>
            <person name="Zhao X.T."/>
            <person name="Wan D.F."/>
            <person name="Jiang H.Q."/>
            <person name="Huang Y."/>
            <person name="He Y.H."/>
            <person name="Qin W.X."/>
            <person name="Han L.W."/>
            <person name="Zhang P.P."/>
            <person name="Qiu X.K."/>
            <person name="He L.P."/>
        </authorList>
    </citation>
    <scope>NUCLEOTIDE SEQUENCE [LARGE SCALE MRNA]</scope>
</reference>
<reference key="4">
    <citation type="submission" date="2005-09" db="EMBL/GenBank/DDBJ databases">
        <authorList>
            <person name="Mural R.J."/>
            <person name="Istrail S."/>
            <person name="Sutton G.G."/>
            <person name="Florea L."/>
            <person name="Halpern A.L."/>
            <person name="Mobarry C.M."/>
            <person name="Lippert R."/>
            <person name="Walenz B."/>
            <person name="Shatkay H."/>
            <person name="Dew I."/>
            <person name="Miller J.R."/>
            <person name="Flanigan M.J."/>
            <person name="Edwards N.J."/>
            <person name="Bolanos R."/>
            <person name="Fasulo D."/>
            <person name="Halldorsson B.V."/>
            <person name="Hannenhalli S."/>
            <person name="Turner R."/>
            <person name="Yooseph S."/>
            <person name="Lu F."/>
            <person name="Nusskern D.R."/>
            <person name="Shue B.C."/>
            <person name="Zheng X.H."/>
            <person name="Zhong F."/>
            <person name="Delcher A.L."/>
            <person name="Huson D.H."/>
            <person name="Kravitz S.A."/>
            <person name="Mouchard L."/>
            <person name="Reinert K."/>
            <person name="Remington K.A."/>
            <person name="Clark A.G."/>
            <person name="Waterman M.S."/>
            <person name="Eichler E.E."/>
            <person name="Adams M.D."/>
            <person name="Hunkapiller M.W."/>
            <person name="Myers E.W."/>
            <person name="Venter J.C."/>
        </authorList>
    </citation>
    <scope>NUCLEOTIDE SEQUENCE [LARGE SCALE GENOMIC DNA]</scope>
</reference>
<reference key="5">
    <citation type="journal article" date="2004" name="Genome Res.">
        <title>The status, quality, and expansion of the NIH full-length cDNA project: the Mammalian Gene Collection (MGC).</title>
        <authorList>
            <consortium name="The MGC Project Team"/>
        </authorList>
    </citation>
    <scope>NUCLEOTIDE SEQUENCE [LARGE SCALE MRNA]</scope>
    <scope>VARIANTS SER-8 AND VAL-185</scope>
    <source>
        <tissue>Brain</tissue>
        <tissue>Skin</tissue>
    </source>
</reference>
<reference key="6">
    <citation type="journal article" date="2002" name="Cell Res.">
        <title>The ATF/CREB site is the key element for transcription of the human RNA methyltransferase like 1(RNMTL1) gene, a newly discovered 17p13.3 gene.</title>
        <authorList>
            <person name="Xu J."/>
            <person name="De Zhu J."/>
            <person name="Ni M."/>
            <person name="Wan F."/>
            <person name="Gu J.R."/>
        </authorList>
    </citation>
    <scope>TISSUE SPECIFICITY</scope>
</reference>
<reference key="7">
    <citation type="journal article" date="2011" name="BMC Syst. Biol.">
        <title>Initial characterization of the human central proteome.</title>
        <authorList>
            <person name="Burkard T.R."/>
            <person name="Planyavsky M."/>
            <person name="Kaupe I."/>
            <person name="Breitwieser F.P."/>
            <person name="Buerckstuemmer T."/>
            <person name="Bennett K.L."/>
            <person name="Superti-Furga G."/>
            <person name="Colinge J."/>
        </authorList>
    </citation>
    <scope>IDENTIFICATION BY MASS SPECTROMETRY [LARGE SCALE ANALYSIS]</scope>
</reference>
<reference key="8">
    <citation type="journal article" date="2013" name="J. Biol. Chem.">
        <title>Mitochondrial ribosomal RNA (rRNA) methyltransferase family members are positioned to modify nascent rRNA in foci near the mitochondrial DNA nucleoid.</title>
        <authorList>
            <person name="Lee K.W."/>
            <person name="Okot-Kotber C."/>
            <person name="LaComb J.F."/>
            <person name="Bogenhagen D.F."/>
        </authorList>
    </citation>
    <scope>FUNCTION</scope>
    <scope>SUBCELLULAR LOCATION</scope>
</reference>
<reference key="9">
    <citation type="journal article" date="2014" name="J. Biol. Chem.">
        <title>Assignment of 2'-O-methyltransferases to modification sites on the mammalian mitochondrial large subunit 16S rRNA.</title>
        <authorList>
            <person name="Lee K.W."/>
            <person name="Bogenhagen D.F."/>
        </authorList>
    </citation>
    <scope>FUNCTION</scope>
</reference>
<reference key="10">
    <citation type="journal article" date="2014" name="J. Proteomics">
        <title>An enzyme assisted RP-RPLC approach for in-depth analysis of human liver phosphoproteome.</title>
        <authorList>
            <person name="Bian Y."/>
            <person name="Song C."/>
            <person name="Cheng K."/>
            <person name="Dong M."/>
            <person name="Wang F."/>
            <person name="Huang J."/>
            <person name="Sun D."/>
            <person name="Wang L."/>
            <person name="Ye M."/>
            <person name="Zou H."/>
        </authorList>
    </citation>
    <scope>IDENTIFICATION BY MASS SPECTROMETRY [LARGE SCALE ANALYSIS]</scope>
    <source>
        <tissue>Liver</tissue>
    </source>
</reference>
<reference key="11">
    <citation type="journal article" date="2014" name="Mol. Biol. Cell">
        <title>MRM2 and MRM3 are involved in biogenesis of the large subunit of the mitochondrial ribosome.</title>
        <authorList>
            <person name="Rorbach J."/>
            <person name="Boesch P."/>
            <person name="Gammage P.A."/>
            <person name="Nicholls T.J."/>
            <person name="Pearce S.F."/>
            <person name="Patel D."/>
            <person name="Hauser A."/>
            <person name="Perocchi F."/>
            <person name="Minczuk M."/>
        </authorList>
    </citation>
    <scope>FUNCTION</scope>
    <scope>SUBCELLULAR LOCATION</scope>
</reference>
<reference key="12">
    <citation type="journal article" date="2015" name="Proteomics">
        <title>N-terminome analysis of the human mitochondrial proteome.</title>
        <authorList>
            <person name="Vaca Jacome A.S."/>
            <person name="Rabilloud T."/>
            <person name="Schaeffer-Reiss C."/>
            <person name="Rompais M."/>
            <person name="Ayoub D."/>
            <person name="Lane L."/>
            <person name="Bairoch A."/>
            <person name="Van Dorsselaer A."/>
            <person name="Carapito C."/>
        </authorList>
    </citation>
    <scope>IDENTIFICATION BY MASS SPECTROMETRY [LARGE SCALE ANALYSIS]</scope>
</reference>
<reference key="13">
    <citation type="journal article" date="2022" name="Nat. Commun.">
        <title>A late-stage assembly checkpoint of the human mitochondrial ribosome large subunit.</title>
        <authorList>
            <person name="Rebelo-Guiomar P."/>
            <person name="Pellegrino S."/>
            <person name="Dent K.C."/>
            <person name="Sas-Chen A."/>
            <person name="Miller-Fleming L."/>
            <person name="Garone C."/>
            <person name="Van Haute L."/>
            <person name="Rogan J.F."/>
            <person name="Dinan A."/>
            <person name="Firth A.E."/>
            <person name="Andrews B."/>
            <person name="Whitworth A.J."/>
            <person name="Schwartz S."/>
            <person name="Warren A.J."/>
            <person name="Minczuk M."/>
        </authorList>
    </citation>
    <scope>FUNCTION</scope>
    <scope>CATALYTIC ACTIVITY</scope>
</reference>
<evidence type="ECO:0000250" key="1"/>
<evidence type="ECO:0000255" key="2"/>
<evidence type="ECO:0000256" key="3">
    <source>
        <dbReference type="SAM" id="MobiDB-lite"/>
    </source>
</evidence>
<evidence type="ECO:0000269" key="4">
    <source>
    </source>
</evidence>
<evidence type="ECO:0000269" key="5">
    <source>
    </source>
</evidence>
<evidence type="ECO:0000269" key="6">
    <source>
    </source>
</evidence>
<evidence type="ECO:0000269" key="7">
    <source>
    </source>
</evidence>
<evidence type="ECO:0000269" key="8">
    <source>
    </source>
</evidence>
<evidence type="ECO:0000269" key="9">
    <source>
    </source>
</evidence>
<evidence type="ECO:0000303" key="10">
    <source>
    </source>
</evidence>
<evidence type="ECO:0000303" key="11">
    <source>
    </source>
</evidence>
<evidence type="ECO:0000303" key="12">
    <source>
    </source>
</evidence>
<evidence type="ECO:0000305" key="13"/>
<evidence type="ECO:0000305" key="14">
    <source>
    </source>
</evidence>
<evidence type="ECO:0000305" key="15">
    <source>
    </source>
</evidence>
<evidence type="ECO:0000312" key="16">
    <source>
        <dbReference type="HGNC" id="HGNC:18485"/>
    </source>
</evidence>
<feature type="transit peptide" description="Mitochondrion" evidence="2">
    <location>
        <begin position="1"/>
        <end position="40"/>
    </location>
</feature>
<feature type="chain" id="PRO_0000311301" description="rRNA methyltransferase 3, mitochondrial">
    <location>
        <begin position="41"/>
        <end position="420"/>
    </location>
</feature>
<feature type="region of interest" description="Disordered" evidence="3">
    <location>
        <begin position="49"/>
        <end position="88"/>
    </location>
</feature>
<feature type="compositionally biased region" description="Basic and acidic residues" evidence="3">
    <location>
        <begin position="69"/>
        <end position="80"/>
    </location>
</feature>
<feature type="binding site" evidence="1">
    <location>
        <position position="356"/>
    </location>
    <ligand>
        <name>S-adenosyl-L-methionine</name>
        <dbReference type="ChEBI" id="CHEBI:59789"/>
    </ligand>
</feature>
<feature type="binding site" evidence="1">
    <location>
        <position position="380"/>
    </location>
    <ligand>
        <name>S-adenosyl-L-methionine</name>
        <dbReference type="ChEBI" id="CHEBI:59789"/>
    </ligand>
</feature>
<feature type="binding site" evidence="1">
    <location>
        <position position="389"/>
    </location>
    <ligand>
        <name>S-adenosyl-L-methionine</name>
        <dbReference type="ChEBI" id="CHEBI:59789"/>
    </ligand>
</feature>
<feature type="sequence variant" id="VAR_037217" description="In dbSNP:rs2273454." evidence="5">
    <original>A</original>
    <variation>S</variation>
    <location>
        <position position="8"/>
    </location>
</feature>
<feature type="sequence variant" id="VAR_037218" description="In dbSNP:rs2249542.">
    <original>G</original>
    <variation>E</variation>
    <location>
        <position position="45"/>
    </location>
</feature>
<feature type="sequence variant" id="VAR_037219" description="In dbSNP:rs17854653." evidence="5">
    <original>I</original>
    <variation>V</variation>
    <location>
        <position position="185"/>
    </location>
</feature>
<feature type="sequence variant" id="VAR_037220" description="In dbSNP:rs35780267.">
    <original>E</original>
    <variation>Q</variation>
    <location>
        <position position="326"/>
    </location>
</feature>
<feature type="sequence conflict" description="In Ref. 3; BAD96620." evidence="13" ref="3">
    <original>A</original>
    <variation>V</variation>
    <location>
        <position position="247"/>
    </location>
</feature>
<keyword id="KW-0002">3D-structure</keyword>
<keyword id="KW-0489">Methyltransferase</keyword>
<keyword id="KW-0496">Mitochondrion</keyword>
<keyword id="KW-1267">Proteomics identification</keyword>
<keyword id="KW-1185">Reference proteome</keyword>
<keyword id="KW-0698">rRNA processing</keyword>
<keyword id="KW-0949">S-adenosyl-L-methionine</keyword>
<keyword id="KW-0808">Transferase</keyword>
<keyword id="KW-0809">Transit peptide</keyword>